<dbReference type="EMBL" id="AJ720634">
    <property type="protein sequence ID" value="CAG32293.1"/>
    <property type="molecule type" value="mRNA"/>
</dbReference>
<dbReference type="RefSeq" id="NP_001007918.1">
    <property type="nucleotide sequence ID" value="NM_001007917.3"/>
</dbReference>
<dbReference type="SMR" id="Q5ZJ00"/>
<dbReference type="FunCoup" id="Q5ZJ00">
    <property type="interactions" value="912"/>
</dbReference>
<dbReference type="STRING" id="9031.ENSGALP00000008114"/>
<dbReference type="PaxDb" id="9031-ENSGALP00000008114"/>
<dbReference type="Ensembl" id="ENSGALT00010037404.1">
    <property type="protein sequence ID" value="ENSGALP00010021668.1"/>
    <property type="gene ID" value="ENSGALG00010015558.1"/>
</dbReference>
<dbReference type="GeneID" id="422197"/>
<dbReference type="KEGG" id="gga:422197"/>
<dbReference type="CTD" id="4354"/>
<dbReference type="VEuPathDB" id="HostDB:geneid_422197"/>
<dbReference type="eggNOG" id="KOG0609">
    <property type="taxonomic scope" value="Eukaryota"/>
</dbReference>
<dbReference type="GeneTree" id="ENSGT00940000158744"/>
<dbReference type="HOGENOM" id="CLU_001715_5_1_1"/>
<dbReference type="InParanoid" id="Q5ZJ00"/>
<dbReference type="OMA" id="KETQGMV"/>
<dbReference type="OrthoDB" id="65789at2759"/>
<dbReference type="PhylomeDB" id="Q5ZJ00"/>
<dbReference type="TreeFam" id="TF314263"/>
<dbReference type="PRO" id="PR:Q5ZJ00"/>
<dbReference type="Proteomes" id="UP000000539">
    <property type="component" value="Chromosome 4"/>
</dbReference>
<dbReference type="Bgee" id="ENSGALG00000005071">
    <property type="expression patterns" value="Expressed in colon and 12 other cell types or tissues"/>
</dbReference>
<dbReference type="GO" id="GO:0005911">
    <property type="term" value="C:cell-cell junction"/>
    <property type="evidence" value="ECO:0000318"/>
    <property type="project" value="GO_Central"/>
</dbReference>
<dbReference type="GO" id="GO:0034451">
    <property type="term" value="C:centriolar satellite"/>
    <property type="evidence" value="ECO:0007669"/>
    <property type="project" value="Ensembl"/>
</dbReference>
<dbReference type="GO" id="GO:0030863">
    <property type="term" value="C:cortical cytoskeleton"/>
    <property type="evidence" value="ECO:0007669"/>
    <property type="project" value="Ensembl"/>
</dbReference>
<dbReference type="GO" id="GO:0005886">
    <property type="term" value="C:plasma membrane"/>
    <property type="evidence" value="ECO:0000318"/>
    <property type="project" value="GO_Central"/>
</dbReference>
<dbReference type="GO" id="GO:0032420">
    <property type="term" value="C:stereocilium"/>
    <property type="evidence" value="ECO:0007669"/>
    <property type="project" value="UniProtKB-SubCell"/>
</dbReference>
<dbReference type="GO" id="GO:0005102">
    <property type="term" value="F:signaling receptor binding"/>
    <property type="evidence" value="ECO:0000318"/>
    <property type="project" value="GO_Central"/>
</dbReference>
<dbReference type="GO" id="GO:0016740">
    <property type="term" value="F:transferase activity"/>
    <property type="evidence" value="ECO:0007669"/>
    <property type="project" value="UniProtKB-KW"/>
</dbReference>
<dbReference type="GO" id="GO:0090022">
    <property type="term" value="P:regulation of neutrophil chemotaxis"/>
    <property type="evidence" value="ECO:0007669"/>
    <property type="project" value="Ensembl"/>
</dbReference>
<dbReference type="CDD" id="cd00071">
    <property type="entry name" value="GMPK"/>
    <property type="match status" value="1"/>
</dbReference>
<dbReference type="CDD" id="cd10830">
    <property type="entry name" value="PDZ_MPP1-like"/>
    <property type="match status" value="1"/>
</dbReference>
<dbReference type="CDD" id="cd12080">
    <property type="entry name" value="SH3_MPP1"/>
    <property type="match status" value="1"/>
</dbReference>
<dbReference type="FunFam" id="2.30.30.40:FF:000135">
    <property type="entry name" value="55 kDa erythrocyte membrane protein"/>
    <property type="match status" value="1"/>
</dbReference>
<dbReference type="FunFam" id="3.30.63.10:FF:000002">
    <property type="entry name" value="Guanylate kinase 1"/>
    <property type="match status" value="1"/>
</dbReference>
<dbReference type="FunFam" id="3.40.50.300:FF:000146">
    <property type="entry name" value="MAGUK p55 subfamily member 6 isoform X1"/>
    <property type="match status" value="1"/>
</dbReference>
<dbReference type="FunFam" id="2.30.42.10:FF:000016">
    <property type="entry name" value="peripheral plasma membrane protein CASK isoform X2"/>
    <property type="match status" value="1"/>
</dbReference>
<dbReference type="Gene3D" id="2.30.42.10">
    <property type="match status" value="1"/>
</dbReference>
<dbReference type="Gene3D" id="3.40.50.300">
    <property type="entry name" value="P-loop containing nucleotide triphosphate hydrolases"/>
    <property type="match status" value="1"/>
</dbReference>
<dbReference type="Gene3D" id="2.30.30.40">
    <property type="entry name" value="SH3 Domains"/>
    <property type="match status" value="1"/>
</dbReference>
<dbReference type="InterPro" id="IPR008145">
    <property type="entry name" value="GK/Ca_channel_bsu"/>
</dbReference>
<dbReference type="InterPro" id="IPR008144">
    <property type="entry name" value="Guanylate_kin-like_dom"/>
</dbReference>
<dbReference type="InterPro" id="IPR020590">
    <property type="entry name" value="Guanylate_kinase_CS"/>
</dbReference>
<dbReference type="InterPro" id="IPR050716">
    <property type="entry name" value="MAGUK"/>
</dbReference>
<dbReference type="InterPro" id="IPR035475">
    <property type="entry name" value="MPP1_SH3"/>
</dbReference>
<dbReference type="InterPro" id="IPR027417">
    <property type="entry name" value="P-loop_NTPase"/>
</dbReference>
<dbReference type="InterPro" id="IPR001478">
    <property type="entry name" value="PDZ"/>
</dbReference>
<dbReference type="InterPro" id="IPR036034">
    <property type="entry name" value="PDZ_sf"/>
</dbReference>
<dbReference type="InterPro" id="IPR036028">
    <property type="entry name" value="SH3-like_dom_sf"/>
</dbReference>
<dbReference type="InterPro" id="IPR001452">
    <property type="entry name" value="SH3_domain"/>
</dbReference>
<dbReference type="PANTHER" id="PTHR23122">
    <property type="entry name" value="MEMBRANE-ASSOCIATED GUANYLATE KINASE MAGUK"/>
    <property type="match status" value="1"/>
</dbReference>
<dbReference type="Pfam" id="PF00625">
    <property type="entry name" value="Guanylate_kin"/>
    <property type="match status" value="1"/>
</dbReference>
<dbReference type="Pfam" id="PF00595">
    <property type="entry name" value="PDZ"/>
    <property type="match status" value="1"/>
</dbReference>
<dbReference type="Pfam" id="PF07653">
    <property type="entry name" value="SH3_2"/>
    <property type="match status" value="1"/>
</dbReference>
<dbReference type="SMART" id="SM00072">
    <property type="entry name" value="GuKc"/>
    <property type="match status" value="1"/>
</dbReference>
<dbReference type="SMART" id="SM00228">
    <property type="entry name" value="PDZ"/>
    <property type="match status" value="1"/>
</dbReference>
<dbReference type="SMART" id="SM00326">
    <property type="entry name" value="SH3"/>
    <property type="match status" value="1"/>
</dbReference>
<dbReference type="SUPFAM" id="SSF52540">
    <property type="entry name" value="P-loop containing nucleoside triphosphate hydrolases"/>
    <property type="match status" value="1"/>
</dbReference>
<dbReference type="SUPFAM" id="SSF50156">
    <property type="entry name" value="PDZ domain-like"/>
    <property type="match status" value="1"/>
</dbReference>
<dbReference type="SUPFAM" id="SSF50044">
    <property type="entry name" value="SH3-domain"/>
    <property type="match status" value="1"/>
</dbReference>
<dbReference type="PROSITE" id="PS00856">
    <property type="entry name" value="GUANYLATE_KINASE_1"/>
    <property type="match status" value="1"/>
</dbReference>
<dbReference type="PROSITE" id="PS50052">
    <property type="entry name" value="GUANYLATE_KINASE_2"/>
    <property type="match status" value="1"/>
</dbReference>
<dbReference type="PROSITE" id="PS50106">
    <property type="entry name" value="PDZ"/>
    <property type="match status" value="1"/>
</dbReference>
<dbReference type="PROSITE" id="PS50002">
    <property type="entry name" value="SH3"/>
    <property type="match status" value="1"/>
</dbReference>
<evidence type="ECO:0000250" key="1"/>
<evidence type="ECO:0000255" key="2">
    <source>
        <dbReference type="PROSITE-ProRule" id="PRU00100"/>
    </source>
</evidence>
<evidence type="ECO:0000255" key="3">
    <source>
        <dbReference type="PROSITE-ProRule" id="PRU00143"/>
    </source>
</evidence>
<evidence type="ECO:0000255" key="4">
    <source>
        <dbReference type="PROSITE-ProRule" id="PRU00192"/>
    </source>
</evidence>
<evidence type="ECO:0000305" key="5"/>
<comment type="function">
    <text evidence="1">May play a role in the regulation of neutrophil polarization.</text>
</comment>
<comment type="subcellular location">
    <subcellularLocation>
        <location>Membrane</location>
        <topology>Peripheral membrane protein</topology>
    </subcellularLocation>
    <subcellularLocation>
        <location evidence="1">Cell projection</location>
        <location evidence="1">Stereocilium</location>
    </subcellularLocation>
</comment>
<comment type="similarity">
    <text evidence="5">Belongs to the MAGUK family.</text>
</comment>
<protein>
    <recommendedName>
        <fullName>55 kDa erythrocyte membrane protein</fullName>
        <shortName>p55</shortName>
    </recommendedName>
    <alternativeName>
        <fullName>Membrane protein, palmitoylated 1</fullName>
    </alternativeName>
</protein>
<organism>
    <name type="scientific">Gallus gallus</name>
    <name type="common">Chicken</name>
    <dbReference type="NCBI Taxonomy" id="9031"/>
    <lineage>
        <taxon>Eukaryota</taxon>
        <taxon>Metazoa</taxon>
        <taxon>Chordata</taxon>
        <taxon>Craniata</taxon>
        <taxon>Vertebrata</taxon>
        <taxon>Euteleostomi</taxon>
        <taxon>Archelosauria</taxon>
        <taxon>Archosauria</taxon>
        <taxon>Dinosauria</taxon>
        <taxon>Saurischia</taxon>
        <taxon>Theropoda</taxon>
        <taxon>Coelurosauria</taxon>
        <taxon>Aves</taxon>
        <taxon>Neognathae</taxon>
        <taxon>Galloanserae</taxon>
        <taxon>Galliformes</taxon>
        <taxon>Phasianidae</taxon>
        <taxon>Phasianinae</taxon>
        <taxon>Gallus</taxon>
    </lineage>
</organism>
<gene>
    <name type="primary">MPP1</name>
    <name type="synonym">EMP55</name>
    <name type="ORF">RCJMB04_22d9</name>
</gene>
<reference key="1">
    <citation type="journal article" date="2005" name="Genome Biol.">
        <title>Full-length cDNAs from chicken bursal lymphocytes to facilitate gene function analysis.</title>
        <authorList>
            <person name="Caldwell R.B."/>
            <person name="Kierzek A.M."/>
            <person name="Arakawa H."/>
            <person name="Bezzubov Y."/>
            <person name="Zaim J."/>
            <person name="Fiedler P."/>
            <person name="Kutter S."/>
            <person name="Blagodatski A."/>
            <person name="Kostovska D."/>
            <person name="Koter M."/>
            <person name="Plachy J."/>
            <person name="Carninci P."/>
            <person name="Hayashizaki Y."/>
            <person name="Buerstedde J.-M."/>
        </authorList>
    </citation>
    <scope>NUCLEOTIDE SEQUENCE [LARGE SCALE MRNA]</scope>
    <source>
        <strain>CB</strain>
        <tissue>Bursa of Fabricius</tissue>
    </source>
</reference>
<proteinExistence type="evidence at transcript level"/>
<keyword id="KW-0966">Cell projection</keyword>
<keyword id="KW-0449">Lipoprotein</keyword>
<keyword id="KW-0472">Membrane</keyword>
<keyword id="KW-0564">Palmitate</keyword>
<keyword id="KW-1185">Reference proteome</keyword>
<keyword id="KW-0728">SH3 domain</keyword>
<keyword id="KW-0808">Transferase</keyword>
<accession>Q5ZJ00</accession>
<feature type="chain" id="PRO_0000347220" description="55 kDa erythrocyte membrane protein">
    <location>
        <begin position="1"/>
        <end position="468"/>
    </location>
</feature>
<feature type="domain" description="PDZ" evidence="3">
    <location>
        <begin position="73"/>
        <end position="154"/>
    </location>
</feature>
<feature type="domain" description="SH3" evidence="4">
    <location>
        <begin position="160"/>
        <end position="230"/>
    </location>
</feature>
<feature type="domain" description="Guanylate kinase-like" evidence="2">
    <location>
        <begin position="284"/>
        <end position="453"/>
    </location>
</feature>
<sequence length="468" mass="52520">MTLKSGRGGGGGSGSMRTALSDLYLEHLLQNRAKPEAIAQAPNAMTEDIYTNGSATLGSPSHSNGREVRKIRLVQFEKVTEEPMGITLKLNDKQSCMVARIFHGGMIHRQGSLHVGDEIIEINGQSVSNHSVDQLQKMLKETQGMVSIKVIPNQQSRLPALQMFMRAQFDYDPKKDNLIPCKEAGLKFQTGDVIQIINKDDSNWWQGRVEGSGTESAGLIPSPELQEWRVASVTQSSQSEAQSCSPFGKKKKYKDKYLAKHSSIFDQLDVVSYEEVVRLPAFKRKTLVLIGASGVGRSHIKNALLSNNPEKFMYPPPYTTRPQKKNEVDGKDYYFVSTEEMTRDISANEFLEFGSYQGNMFGTKFETVHKIHQQDKVAILDIEPQTLKIVRTAELSPFIVFIAPTDKAEESEALQQLRKDSESIRSRYAHYFDLSIVNNGVEESLKLLEEAFEQACSSPQWVPVSWVY</sequence>
<name>EM55_CHICK</name>